<reference key="1">
    <citation type="journal article" date="1997" name="Nature">
        <title>The nucleotide sequence of Saccharomyces cerevisiae chromosome IV.</title>
        <authorList>
            <person name="Jacq C."/>
            <person name="Alt-Moerbe J."/>
            <person name="Andre B."/>
            <person name="Arnold W."/>
            <person name="Bahr A."/>
            <person name="Ballesta J.P.G."/>
            <person name="Bargues M."/>
            <person name="Baron L."/>
            <person name="Becker A."/>
            <person name="Biteau N."/>
            <person name="Bloecker H."/>
            <person name="Blugeon C."/>
            <person name="Boskovic J."/>
            <person name="Brandt P."/>
            <person name="Brueckner M."/>
            <person name="Buitrago M.J."/>
            <person name="Coster F."/>
            <person name="Delaveau T."/>
            <person name="del Rey F."/>
            <person name="Dujon B."/>
            <person name="Eide L.G."/>
            <person name="Garcia-Cantalejo J.M."/>
            <person name="Goffeau A."/>
            <person name="Gomez-Peris A."/>
            <person name="Granotier C."/>
            <person name="Hanemann V."/>
            <person name="Hankeln T."/>
            <person name="Hoheisel J.D."/>
            <person name="Jaeger W."/>
            <person name="Jimenez A."/>
            <person name="Jonniaux J.-L."/>
            <person name="Kraemer C."/>
            <person name="Kuester H."/>
            <person name="Laamanen P."/>
            <person name="Legros Y."/>
            <person name="Louis E.J."/>
            <person name="Moeller-Rieker S."/>
            <person name="Monnet A."/>
            <person name="Moro M."/>
            <person name="Mueller-Auer S."/>
            <person name="Nussbaumer B."/>
            <person name="Paricio N."/>
            <person name="Paulin L."/>
            <person name="Perea J."/>
            <person name="Perez-Alonso M."/>
            <person name="Perez-Ortin J.E."/>
            <person name="Pohl T.M."/>
            <person name="Prydz H."/>
            <person name="Purnelle B."/>
            <person name="Rasmussen S.W."/>
            <person name="Remacha M.A."/>
            <person name="Revuelta J.L."/>
            <person name="Rieger M."/>
            <person name="Salom D."/>
            <person name="Saluz H.P."/>
            <person name="Saiz J.E."/>
            <person name="Saren A.-M."/>
            <person name="Schaefer M."/>
            <person name="Scharfe M."/>
            <person name="Schmidt E.R."/>
            <person name="Schneider C."/>
            <person name="Scholler P."/>
            <person name="Schwarz S."/>
            <person name="Soler-Mira A."/>
            <person name="Urrestarazu L.A."/>
            <person name="Verhasselt P."/>
            <person name="Vissers S."/>
            <person name="Voet M."/>
            <person name="Volckaert G."/>
            <person name="Wagner G."/>
            <person name="Wambutt R."/>
            <person name="Wedler E."/>
            <person name="Wedler H."/>
            <person name="Woelfl S."/>
            <person name="Harris D.E."/>
            <person name="Bowman S."/>
            <person name="Brown D."/>
            <person name="Churcher C.M."/>
            <person name="Connor R."/>
            <person name="Dedman K."/>
            <person name="Gentles S."/>
            <person name="Hamlin N."/>
            <person name="Hunt S."/>
            <person name="Jones L."/>
            <person name="McDonald S."/>
            <person name="Murphy L.D."/>
            <person name="Niblett D."/>
            <person name="Odell C."/>
            <person name="Oliver K."/>
            <person name="Rajandream M.A."/>
            <person name="Richards C."/>
            <person name="Shore L."/>
            <person name="Walsh S.V."/>
            <person name="Barrell B.G."/>
            <person name="Dietrich F.S."/>
            <person name="Mulligan J.T."/>
            <person name="Allen E."/>
            <person name="Araujo R."/>
            <person name="Aviles E."/>
            <person name="Berno A."/>
            <person name="Carpenter J."/>
            <person name="Chen E."/>
            <person name="Cherry J.M."/>
            <person name="Chung E."/>
            <person name="Duncan M."/>
            <person name="Hunicke-Smith S."/>
            <person name="Hyman R.W."/>
            <person name="Komp C."/>
            <person name="Lashkari D."/>
            <person name="Lew H."/>
            <person name="Lin D."/>
            <person name="Mosedale D."/>
            <person name="Nakahara K."/>
            <person name="Namath A."/>
            <person name="Oefner P."/>
            <person name="Oh C."/>
            <person name="Petel F.X."/>
            <person name="Roberts D."/>
            <person name="Schramm S."/>
            <person name="Schroeder M."/>
            <person name="Shogren T."/>
            <person name="Shroff N."/>
            <person name="Winant A."/>
            <person name="Yelton M.A."/>
            <person name="Botstein D."/>
            <person name="Davis R.W."/>
            <person name="Johnston M."/>
            <person name="Andrews S."/>
            <person name="Brinkman R."/>
            <person name="Cooper J."/>
            <person name="Ding H."/>
            <person name="Du Z."/>
            <person name="Favello A."/>
            <person name="Fulton L."/>
            <person name="Gattung S."/>
            <person name="Greco T."/>
            <person name="Hallsworth K."/>
            <person name="Hawkins J."/>
            <person name="Hillier L.W."/>
            <person name="Jier M."/>
            <person name="Johnson D."/>
            <person name="Johnston L."/>
            <person name="Kirsten J."/>
            <person name="Kucaba T."/>
            <person name="Langston Y."/>
            <person name="Latreille P."/>
            <person name="Le T."/>
            <person name="Mardis E."/>
            <person name="Menezes S."/>
            <person name="Miller N."/>
            <person name="Nhan M."/>
            <person name="Pauley A."/>
            <person name="Peluso D."/>
            <person name="Rifkin L."/>
            <person name="Riles L."/>
            <person name="Taich A."/>
            <person name="Trevaskis E."/>
            <person name="Vignati D."/>
            <person name="Wilcox L."/>
            <person name="Wohldman P."/>
            <person name="Vaudin M."/>
            <person name="Wilson R."/>
            <person name="Waterston R."/>
            <person name="Albermann K."/>
            <person name="Hani J."/>
            <person name="Heumann K."/>
            <person name="Kleine K."/>
            <person name="Mewes H.-W."/>
            <person name="Zollner A."/>
            <person name="Zaccaria P."/>
        </authorList>
    </citation>
    <scope>NUCLEOTIDE SEQUENCE [LARGE SCALE GENOMIC DNA]</scope>
    <source>
        <strain>ATCC 204508 / S288c</strain>
    </source>
</reference>
<reference key="2">
    <citation type="journal article" date="2014" name="G3 (Bethesda)">
        <title>The reference genome sequence of Saccharomyces cerevisiae: Then and now.</title>
        <authorList>
            <person name="Engel S.R."/>
            <person name="Dietrich F.S."/>
            <person name="Fisk D.G."/>
            <person name="Binkley G."/>
            <person name="Balakrishnan R."/>
            <person name="Costanzo M.C."/>
            <person name="Dwight S.S."/>
            <person name="Hitz B.C."/>
            <person name="Karra K."/>
            <person name="Nash R.S."/>
            <person name="Weng S."/>
            <person name="Wong E.D."/>
            <person name="Lloyd P."/>
            <person name="Skrzypek M.S."/>
            <person name="Miyasato S.R."/>
            <person name="Simison M."/>
            <person name="Cherry J.M."/>
        </authorList>
    </citation>
    <scope>GENOME REANNOTATION</scope>
    <source>
        <strain>ATCC 204508 / S288c</strain>
    </source>
</reference>
<reference key="3">
    <citation type="journal article" date="2007" name="Genome Res.">
        <title>Approaching a complete repository of sequence-verified protein-encoding clones for Saccharomyces cerevisiae.</title>
        <authorList>
            <person name="Hu Y."/>
            <person name="Rolfs A."/>
            <person name="Bhullar B."/>
            <person name="Murthy T.V.S."/>
            <person name="Zhu C."/>
            <person name="Berger M.F."/>
            <person name="Camargo A.A."/>
            <person name="Kelley F."/>
            <person name="McCarron S."/>
            <person name="Jepson D."/>
            <person name="Richardson A."/>
            <person name="Raphael J."/>
            <person name="Moreira D."/>
            <person name="Taycher E."/>
            <person name="Zuo D."/>
            <person name="Mohr S."/>
            <person name="Kane M.F."/>
            <person name="Williamson J."/>
            <person name="Simpson A.J.G."/>
            <person name="Bulyk M.L."/>
            <person name="Harlow E."/>
            <person name="Marsischky G."/>
            <person name="Kolodner R.D."/>
            <person name="LaBaer J."/>
        </authorList>
    </citation>
    <scope>NUCLEOTIDE SEQUENCE [GENOMIC DNA]</scope>
    <source>
        <strain>ATCC 204508 / S288c</strain>
    </source>
</reference>
<reference key="4">
    <citation type="journal article" date="2002" name="BMC Genet.">
        <title>Conservation of the COP9/signalosome in budding yeast.</title>
        <authorList>
            <person name="Wee S."/>
            <person name="Hetfeld B."/>
            <person name="Dubiel W."/>
            <person name="Wolf D.A."/>
        </authorList>
    </citation>
    <scope>FUNCTION OF THE COP9 SIGNALOSOME COMPLEX</scope>
</reference>
<reference key="5">
    <citation type="journal article" date="2002" name="EMBO Rep.">
        <title>COP9 signalosome components play a role in the mating pheromone response of S. cerevisiae.</title>
        <authorList>
            <person name="Maytal-Kivity V."/>
            <person name="Piran R."/>
            <person name="Pick E."/>
            <person name="Hofmann K."/>
            <person name="Glickman M.H."/>
        </authorList>
    </citation>
    <scope>INTERACTION WITH CSN12 AND CSI1</scope>
    <scope>IDENTIFICATION IN THE COP9 SIGNALOSOME COMPLEX</scope>
    <scope>FUNCTION OF THE COP9 SIGNALOSOME COMPLEX</scope>
</reference>
<reference key="6">
    <citation type="journal article" date="2002" name="Nature">
        <title>Functional organization of the yeast proteome by systematic analysis of protein complexes.</title>
        <authorList>
            <person name="Gavin A.-C."/>
            <person name="Boesche M."/>
            <person name="Krause R."/>
            <person name="Grandi P."/>
            <person name="Marzioch M."/>
            <person name="Bauer A."/>
            <person name="Schultz J."/>
            <person name="Rick J.M."/>
            <person name="Michon A.-M."/>
            <person name="Cruciat C.-M."/>
            <person name="Remor M."/>
            <person name="Hoefert C."/>
            <person name="Schelder M."/>
            <person name="Brajenovic M."/>
            <person name="Ruffner H."/>
            <person name="Merino A."/>
            <person name="Klein K."/>
            <person name="Hudak M."/>
            <person name="Dickson D."/>
            <person name="Rudi T."/>
            <person name="Gnau V."/>
            <person name="Bauch A."/>
            <person name="Bastuck S."/>
            <person name="Huhse B."/>
            <person name="Leutwein C."/>
            <person name="Heurtier M.-A."/>
            <person name="Copley R.R."/>
            <person name="Edelmann A."/>
            <person name="Querfurth E."/>
            <person name="Rybin V."/>
            <person name="Drewes G."/>
            <person name="Raida M."/>
            <person name="Bouwmeester T."/>
            <person name="Bork P."/>
            <person name="Seraphin B."/>
            <person name="Kuster B."/>
            <person name="Neubauer G."/>
            <person name="Superti-Furga G."/>
        </authorList>
    </citation>
    <scope>INTERACTION WITH RRI1/CSN5</scope>
    <scope>IDENTIFICATION BY MASS SPECTROMETRY</scope>
</reference>
<reference key="7">
    <citation type="journal article" date="2003" name="Int. J. Biochem. Cell Biol.">
        <title>The COP9 signalosome-like complex in S. cerevisiae and links to other PCI complexes.</title>
        <authorList>
            <person name="Maytal-Kivity V."/>
            <person name="Pick E."/>
            <person name="Piran R."/>
            <person name="Hofmann K."/>
            <person name="Glickman M.H."/>
        </authorList>
    </citation>
    <scope>INTERACTION WITH CSN12; CSI1 AND RPN5</scope>
    <scope>IDENTIFICATION IN THE COP9 SIGNALOSOME COMPLEX</scope>
</reference>
<reference key="8">
    <citation type="journal article" date="2003" name="Nature">
        <title>Global analysis of protein localization in budding yeast.</title>
        <authorList>
            <person name="Huh W.-K."/>
            <person name="Falvo J.V."/>
            <person name="Gerke L.C."/>
            <person name="Carroll A.S."/>
            <person name="Howson R.W."/>
            <person name="Weissman J.S."/>
            <person name="O'Shea E.K."/>
        </authorList>
    </citation>
    <scope>SUBCELLULAR LOCATION [LARGE SCALE ANALYSIS]</scope>
</reference>
<reference key="9">
    <citation type="journal article" date="2003" name="Nature">
        <title>Global analysis of protein expression in yeast.</title>
        <authorList>
            <person name="Ghaemmaghami S."/>
            <person name="Huh W.-K."/>
            <person name="Bower K."/>
            <person name="Howson R.W."/>
            <person name="Belle A."/>
            <person name="Dephoure N."/>
            <person name="O'Shea E.K."/>
            <person name="Weissman J.S."/>
        </authorList>
    </citation>
    <scope>LEVEL OF PROTEIN EXPRESSION [LARGE SCALE ANALYSIS]</scope>
</reference>
<evidence type="ECO:0000269" key="1">
    <source>
    </source>
</evidence>
<evidence type="ECO:0000269" key="2">
    <source>
    </source>
</evidence>
<evidence type="ECO:0000269" key="3">
    <source>
    </source>
</evidence>
<evidence type="ECO:0000269" key="4">
    <source>
    </source>
</evidence>
<evidence type="ECO:0000269" key="5">
    <source>
    </source>
</evidence>
<evidence type="ECO:0000305" key="6">
    <source>
    </source>
</evidence>
<name>CSN9_YEAST</name>
<sequence>MVMREETIKSLEDPYKYHYKEEWLNTKDPDEQQLFEIFAFGNIKDLPENIILTSLMRSKLEKLTLVTLSEIYNELSYELIKEECQIEDDGIIESHLIQLQNIFKAEMDSVSKSMKFSRRFDCRDVYCHEKELTIIKNPRVTKEYLVQNLRSWETKLKQNILE</sequence>
<proteinExistence type="evidence at protein level"/>
<organism>
    <name type="scientific">Saccharomyces cerevisiae (strain ATCC 204508 / S288c)</name>
    <name type="common">Baker's yeast</name>
    <dbReference type="NCBI Taxonomy" id="559292"/>
    <lineage>
        <taxon>Eukaryota</taxon>
        <taxon>Fungi</taxon>
        <taxon>Dikarya</taxon>
        <taxon>Ascomycota</taxon>
        <taxon>Saccharomycotina</taxon>
        <taxon>Saccharomycetes</taxon>
        <taxon>Saccharomycetales</taxon>
        <taxon>Saccharomycetaceae</taxon>
        <taxon>Saccharomyces</taxon>
    </lineage>
</organism>
<feature type="chain" id="PRO_0000121020" description="COP9 signalosome complex subunit 9">
    <location>
        <begin position="1"/>
        <end position="162"/>
    </location>
</feature>
<feature type="domain" description="PCI">
    <location>
        <begin position="6"/>
        <end position="118"/>
    </location>
</feature>
<accession>Q03981</accession>
<accession>D6VSG1</accession>
<dbReference type="EMBL" id="Z46727">
    <property type="protein sequence ID" value="CAA86684.1"/>
    <property type="molecule type" value="Genomic_DNA"/>
</dbReference>
<dbReference type="EMBL" id="AY557666">
    <property type="protein sequence ID" value="AAS55992.1"/>
    <property type="molecule type" value="Genomic_DNA"/>
</dbReference>
<dbReference type="EMBL" id="BK006938">
    <property type="protein sequence ID" value="DAA12021.1"/>
    <property type="molecule type" value="Genomic_DNA"/>
</dbReference>
<dbReference type="PIR" id="S49775">
    <property type="entry name" value="S49775"/>
</dbReference>
<dbReference type="RefSeq" id="NP_010464.1">
    <property type="nucleotide sequence ID" value="NM_001180486.1"/>
</dbReference>
<dbReference type="SMR" id="Q03981"/>
<dbReference type="BioGRID" id="32232">
    <property type="interactions" value="137"/>
</dbReference>
<dbReference type="ComplexPortal" id="CPX-1894">
    <property type="entry name" value="COP9 signalosome complex"/>
</dbReference>
<dbReference type="DIP" id="DIP-1580N"/>
<dbReference type="FunCoup" id="Q03981">
    <property type="interactions" value="121"/>
</dbReference>
<dbReference type="IntAct" id="Q03981">
    <property type="interactions" value="11"/>
</dbReference>
<dbReference type="MINT" id="Q03981"/>
<dbReference type="STRING" id="4932.YDR179C"/>
<dbReference type="PaxDb" id="4932-YDR179C"/>
<dbReference type="PeptideAtlas" id="Q03981"/>
<dbReference type="EnsemblFungi" id="YDR179C_mRNA">
    <property type="protein sequence ID" value="YDR179C"/>
    <property type="gene ID" value="YDR179C"/>
</dbReference>
<dbReference type="GeneID" id="851759"/>
<dbReference type="KEGG" id="sce:YDR179C"/>
<dbReference type="AGR" id="SGD:S000002586"/>
<dbReference type="SGD" id="S000002586">
    <property type="gene designation" value="CSN9"/>
</dbReference>
<dbReference type="VEuPathDB" id="FungiDB:YDR179C"/>
<dbReference type="eggNOG" id="ENOG502S4AD">
    <property type="taxonomic scope" value="Eukaryota"/>
</dbReference>
<dbReference type="HOGENOM" id="CLU_138722_0_0_1"/>
<dbReference type="InParanoid" id="Q03981"/>
<dbReference type="OMA" id="FDCRDVY"/>
<dbReference type="OrthoDB" id="10265275at2759"/>
<dbReference type="BioCyc" id="YEAST:G3O-29767-MONOMER"/>
<dbReference type="BioGRID-ORCS" id="851759">
    <property type="hits" value="0 hits in 10 CRISPR screens"/>
</dbReference>
<dbReference type="PRO" id="PR:Q03981"/>
<dbReference type="Proteomes" id="UP000002311">
    <property type="component" value="Chromosome IV"/>
</dbReference>
<dbReference type="RNAct" id="Q03981">
    <property type="molecule type" value="protein"/>
</dbReference>
<dbReference type="GO" id="GO:0008180">
    <property type="term" value="C:COP9 signalosome"/>
    <property type="evidence" value="ECO:0000314"/>
    <property type="project" value="SGD"/>
</dbReference>
<dbReference type="GO" id="GO:0005852">
    <property type="term" value="C:eukaryotic translation initiation factor 3 complex"/>
    <property type="evidence" value="ECO:0000318"/>
    <property type="project" value="GO_Central"/>
</dbReference>
<dbReference type="GO" id="GO:0005634">
    <property type="term" value="C:nucleus"/>
    <property type="evidence" value="ECO:0000303"/>
    <property type="project" value="ComplexPortal"/>
</dbReference>
<dbReference type="GO" id="GO:0000754">
    <property type="term" value="P:adaptation of signaling pathway by response to pheromone involved in conjugation with cellular fusion"/>
    <property type="evidence" value="ECO:0000303"/>
    <property type="project" value="ComplexPortal"/>
</dbReference>
<dbReference type="GO" id="GO:0071444">
    <property type="term" value="P:cellular response to pheromone"/>
    <property type="evidence" value="ECO:0000315"/>
    <property type="project" value="SGD"/>
</dbReference>
<dbReference type="GO" id="GO:0000747">
    <property type="term" value="P:conjugation with cellular fusion"/>
    <property type="evidence" value="ECO:0000315"/>
    <property type="project" value="SGD"/>
</dbReference>
<dbReference type="GO" id="GO:0002183">
    <property type="term" value="P:cytoplasmic translational initiation"/>
    <property type="evidence" value="ECO:0000318"/>
    <property type="project" value="GO_Central"/>
</dbReference>
<dbReference type="GO" id="GO:0000338">
    <property type="term" value="P:protein deneddylation"/>
    <property type="evidence" value="ECO:0000315"/>
    <property type="project" value="SGD"/>
</dbReference>
<dbReference type="GO" id="GO:2000434">
    <property type="term" value="P:regulation of protein neddylation"/>
    <property type="evidence" value="ECO:0000303"/>
    <property type="project" value="ComplexPortal"/>
</dbReference>
<dbReference type="InterPro" id="IPR016806">
    <property type="entry name" value="Csn9_fungi"/>
</dbReference>
<dbReference type="PIRSF" id="PIRSF022632">
    <property type="entry name" value="UCP022632"/>
    <property type="match status" value="1"/>
</dbReference>
<protein>
    <recommendedName>
        <fullName>COP9 signalosome complex subunit 9</fullName>
    </recommendedName>
</protein>
<gene>
    <name type="primary">CSN9</name>
    <name type="ordered locus">YDR179C</name>
</gene>
<keyword id="KW-0963">Cytoplasm</keyword>
<keyword id="KW-0539">Nucleus</keyword>
<keyword id="KW-1185">Reference proteome</keyword>
<keyword id="KW-0736">Signalosome</keyword>
<comment type="function">
    <text evidence="2 3">Component of the COP9 signalosome (CSN) complex that acts as a regulator of the ubiquitin (Ubl) conjugation pathway by mediating the deneddylation of the cullin subunit of SCF-type E3 ubiquitin-protein ligase complexes. The CSN complex is involved in the regulation of the mating pheromone response.</text>
</comment>
<comment type="subunit">
    <text evidence="1 3 4">Component of a COP9 signalosome-like (CSN) complex, composed of at least RRI1/CSN5, CSN9, RRI2/CSN10, PCI8/CSN11, CSN12 and CSI1. In the complex, it probably interacts directly with CSN12 and CSI1. Also interacts with RPN5.</text>
</comment>
<comment type="interaction">
    <interactant intactId="EBI-33535">
        <id>Q03981</id>
    </interactant>
    <interactant intactId="EBI-28044">
        <id>Q04368</id>
        <label>CSI1</label>
    </interactant>
    <organismsDiffer>false</organismsDiffer>
    <experiments>6</experiments>
</comment>
<comment type="interaction">
    <interactant intactId="EBI-33535">
        <id>Q03981</id>
    </interactant>
    <interactant intactId="EBI-15935">
        <id>Q12250</id>
        <label>RPN5</label>
    </interactant>
    <organismsDiffer>false</organismsDiffer>
    <experiments>6</experiments>
</comment>
<comment type="interaction">
    <interactant intactId="EBI-33535">
        <id>Q03981</id>
    </interactant>
    <interactant intactId="EBI-37511">
        <id>Q12468</id>
        <label>RRI1</label>
    </interactant>
    <organismsDiffer>false</organismsDiffer>
    <experiments>4</experiments>
</comment>
<comment type="subcellular location">
    <subcellularLocation>
        <location evidence="6">Cytoplasm</location>
    </subcellularLocation>
    <subcellularLocation>
        <location evidence="6">Nucleus</location>
    </subcellularLocation>
</comment>
<comment type="miscellaneous">
    <text evidence="5">Present with 358 molecules/cell in log phase SD medium.</text>
</comment>